<sequence>MAKEKYDRSKPHVNIGTIGHVDHGKTTLTAAITTVLARRLPTSVNQPKDYASIDAAPEERERGITINTAHVEYETEKRHYAHIDAPGHADYVKNMITGAAQMDGAILVVASTDGPMPQTREHILLSRQVGVKHLIVFMNKVDLVDDEELLELVEMEIRDLLSEYDFPGDDLPVIQGSALKALEGDEKYEDIIMELMSTVDEYIPEPERDTDKPLLLPVEDVFSITGRGTVASGRIDRGTVRVNDEVEIVGIKEDIQKAVVTGVEMFRKQLDEGLAGDNVGVLLRGVQRDEIERGQVLAKPGSINPHTKFKGEVYILSKEEGGRHTPFFNNYRPQFYFRTTDVTGSIELPAGTEMVMPGDNVTIEVELIHPIAVEQGTTFSIREGGRTVGSGIVSEIEA</sequence>
<protein>
    <recommendedName>
        <fullName evidence="2">Elongation factor Tu</fullName>
        <shortName evidence="2">EF-Tu</shortName>
        <ecNumber evidence="2">3.6.5.3</ecNumber>
    </recommendedName>
</protein>
<name>EFTU_STRA1</name>
<reference key="1">
    <citation type="journal article" date="2005" name="Proc. Natl. Acad. Sci. U.S.A.">
        <title>Genome analysis of multiple pathogenic isolates of Streptococcus agalactiae: implications for the microbial 'pan-genome'.</title>
        <authorList>
            <person name="Tettelin H."/>
            <person name="Masignani V."/>
            <person name="Cieslewicz M.J."/>
            <person name="Donati C."/>
            <person name="Medini D."/>
            <person name="Ward N.L."/>
            <person name="Angiuoli S.V."/>
            <person name="Crabtree J."/>
            <person name="Jones A.L."/>
            <person name="Durkin A.S."/>
            <person name="DeBoy R.T."/>
            <person name="Davidsen T.M."/>
            <person name="Mora M."/>
            <person name="Scarselli M."/>
            <person name="Margarit y Ros I."/>
            <person name="Peterson J.D."/>
            <person name="Hauser C.R."/>
            <person name="Sundaram J.P."/>
            <person name="Nelson W.C."/>
            <person name="Madupu R."/>
            <person name="Brinkac L.M."/>
            <person name="Dodson R.J."/>
            <person name="Rosovitz M.J."/>
            <person name="Sullivan S.A."/>
            <person name="Daugherty S.C."/>
            <person name="Haft D.H."/>
            <person name="Selengut J."/>
            <person name="Gwinn M.L."/>
            <person name="Zhou L."/>
            <person name="Zafar N."/>
            <person name="Khouri H."/>
            <person name="Radune D."/>
            <person name="Dimitrov G."/>
            <person name="Watkins K."/>
            <person name="O'Connor K.J."/>
            <person name="Smith S."/>
            <person name="Utterback T.R."/>
            <person name="White O."/>
            <person name="Rubens C.E."/>
            <person name="Grandi G."/>
            <person name="Madoff L.C."/>
            <person name="Kasper D.L."/>
            <person name="Telford J.L."/>
            <person name="Wessels M.R."/>
            <person name="Rappuoli R."/>
            <person name="Fraser C.M."/>
        </authorList>
    </citation>
    <scope>NUCLEOTIDE SEQUENCE [LARGE SCALE GENOMIC DNA]</scope>
    <source>
        <strain>ATCC 27591 / A909 / CDC SS700</strain>
    </source>
</reference>
<dbReference type="EC" id="3.6.5.3" evidence="2"/>
<dbReference type="EMBL" id="CP000114">
    <property type="protein sequence ID" value="ABA45463.1"/>
    <property type="molecule type" value="Genomic_DNA"/>
</dbReference>
<dbReference type="RefSeq" id="WP_001040730.1">
    <property type="nucleotide sequence ID" value="NC_007432.1"/>
</dbReference>
<dbReference type="SMR" id="Q3K1U4"/>
<dbReference type="GeneID" id="66885714"/>
<dbReference type="KEGG" id="sak:SAK_0887"/>
<dbReference type="HOGENOM" id="CLU_007265_0_0_9"/>
<dbReference type="GO" id="GO:0005829">
    <property type="term" value="C:cytosol"/>
    <property type="evidence" value="ECO:0007669"/>
    <property type="project" value="TreeGrafter"/>
</dbReference>
<dbReference type="GO" id="GO:0005525">
    <property type="term" value="F:GTP binding"/>
    <property type="evidence" value="ECO:0007669"/>
    <property type="project" value="UniProtKB-UniRule"/>
</dbReference>
<dbReference type="GO" id="GO:0003924">
    <property type="term" value="F:GTPase activity"/>
    <property type="evidence" value="ECO:0007669"/>
    <property type="project" value="InterPro"/>
</dbReference>
<dbReference type="GO" id="GO:0003746">
    <property type="term" value="F:translation elongation factor activity"/>
    <property type="evidence" value="ECO:0007669"/>
    <property type="project" value="UniProtKB-UniRule"/>
</dbReference>
<dbReference type="CDD" id="cd01884">
    <property type="entry name" value="EF_Tu"/>
    <property type="match status" value="1"/>
</dbReference>
<dbReference type="CDD" id="cd03697">
    <property type="entry name" value="EFTU_II"/>
    <property type="match status" value="1"/>
</dbReference>
<dbReference type="CDD" id="cd03707">
    <property type="entry name" value="EFTU_III"/>
    <property type="match status" value="1"/>
</dbReference>
<dbReference type="FunFam" id="2.40.30.10:FF:000001">
    <property type="entry name" value="Elongation factor Tu"/>
    <property type="match status" value="1"/>
</dbReference>
<dbReference type="FunFam" id="3.40.50.300:FF:000003">
    <property type="entry name" value="Elongation factor Tu"/>
    <property type="match status" value="1"/>
</dbReference>
<dbReference type="Gene3D" id="3.40.50.300">
    <property type="entry name" value="P-loop containing nucleotide triphosphate hydrolases"/>
    <property type="match status" value="1"/>
</dbReference>
<dbReference type="Gene3D" id="2.40.30.10">
    <property type="entry name" value="Translation factors"/>
    <property type="match status" value="2"/>
</dbReference>
<dbReference type="HAMAP" id="MF_00118_B">
    <property type="entry name" value="EF_Tu_B"/>
    <property type="match status" value="1"/>
</dbReference>
<dbReference type="InterPro" id="IPR041709">
    <property type="entry name" value="EF-Tu_GTP-bd"/>
</dbReference>
<dbReference type="InterPro" id="IPR050055">
    <property type="entry name" value="EF-Tu_GTPase"/>
</dbReference>
<dbReference type="InterPro" id="IPR004161">
    <property type="entry name" value="EFTu-like_2"/>
</dbReference>
<dbReference type="InterPro" id="IPR033720">
    <property type="entry name" value="EFTU_2"/>
</dbReference>
<dbReference type="InterPro" id="IPR031157">
    <property type="entry name" value="G_TR_CS"/>
</dbReference>
<dbReference type="InterPro" id="IPR027417">
    <property type="entry name" value="P-loop_NTPase"/>
</dbReference>
<dbReference type="InterPro" id="IPR005225">
    <property type="entry name" value="Small_GTP-bd"/>
</dbReference>
<dbReference type="InterPro" id="IPR000795">
    <property type="entry name" value="T_Tr_GTP-bd_dom"/>
</dbReference>
<dbReference type="InterPro" id="IPR009000">
    <property type="entry name" value="Transl_B-barrel_sf"/>
</dbReference>
<dbReference type="InterPro" id="IPR009001">
    <property type="entry name" value="Transl_elong_EF1A/Init_IF2_C"/>
</dbReference>
<dbReference type="InterPro" id="IPR004541">
    <property type="entry name" value="Transl_elong_EFTu/EF1A_bac/org"/>
</dbReference>
<dbReference type="InterPro" id="IPR004160">
    <property type="entry name" value="Transl_elong_EFTu/EF1A_C"/>
</dbReference>
<dbReference type="NCBIfam" id="TIGR00485">
    <property type="entry name" value="EF-Tu"/>
    <property type="match status" value="1"/>
</dbReference>
<dbReference type="NCBIfam" id="NF000766">
    <property type="entry name" value="PRK00049.1"/>
    <property type="match status" value="1"/>
</dbReference>
<dbReference type="NCBIfam" id="NF009372">
    <property type="entry name" value="PRK12735.1"/>
    <property type="match status" value="1"/>
</dbReference>
<dbReference type="NCBIfam" id="NF009373">
    <property type="entry name" value="PRK12736.1"/>
    <property type="match status" value="1"/>
</dbReference>
<dbReference type="NCBIfam" id="TIGR00231">
    <property type="entry name" value="small_GTP"/>
    <property type="match status" value="1"/>
</dbReference>
<dbReference type="PANTHER" id="PTHR43721:SF22">
    <property type="entry name" value="ELONGATION FACTOR TU, MITOCHONDRIAL"/>
    <property type="match status" value="1"/>
</dbReference>
<dbReference type="PANTHER" id="PTHR43721">
    <property type="entry name" value="ELONGATION FACTOR TU-RELATED"/>
    <property type="match status" value="1"/>
</dbReference>
<dbReference type="Pfam" id="PF00009">
    <property type="entry name" value="GTP_EFTU"/>
    <property type="match status" value="1"/>
</dbReference>
<dbReference type="Pfam" id="PF03144">
    <property type="entry name" value="GTP_EFTU_D2"/>
    <property type="match status" value="1"/>
</dbReference>
<dbReference type="Pfam" id="PF03143">
    <property type="entry name" value="GTP_EFTU_D3"/>
    <property type="match status" value="1"/>
</dbReference>
<dbReference type="PRINTS" id="PR00315">
    <property type="entry name" value="ELONGATNFCT"/>
</dbReference>
<dbReference type="SUPFAM" id="SSF50465">
    <property type="entry name" value="EF-Tu/eEF-1alpha/eIF2-gamma C-terminal domain"/>
    <property type="match status" value="1"/>
</dbReference>
<dbReference type="SUPFAM" id="SSF52540">
    <property type="entry name" value="P-loop containing nucleoside triphosphate hydrolases"/>
    <property type="match status" value="1"/>
</dbReference>
<dbReference type="SUPFAM" id="SSF50447">
    <property type="entry name" value="Translation proteins"/>
    <property type="match status" value="1"/>
</dbReference>
<dbReference type="PROSITE" id="PS00301">
    <property type="entry name" value="G_TR_1"/>
    <property type="match status" value="1"/>
</dbReference>
<dbReference type="PROSITE" id="PS51722">
    <property type="entry name" value="G_TR_2"/>
    <property type="match status" value="1"/>
</dbReference>
<keyword id="KW-0963">Cytoplasm</keyword>
<keyword id="KW-0251">Elongation factor</keyword>
<keyword id="KW-0342">GTP-binding</keyword>
<keyword id="KW-0378">Hydrolase</keyword>
<keyword id="KW-0460">Magnesium</keyword>
<keyword id="KW-0479">Metal-binding</keyword>
<keyword id="KW-0547">Nucleotide-binding</keyword>
<keyword id="KW-0648">Protein biosynthesis</keyword>
<proteinExistence type="inferred from homology"/>
<accession>Q3K1U4</accession>
<feature type="chain" id="PRO_1000015755" description="Elongation factor Tu">
    <location>
        <begin position="1"/>
        <end position="398"/>
    </location>
</feature>
<feature type="domain" description="tr-type G">
    <location>
        <begin position="10"/>
        <end position="207"/>
    </location>
</feature>
<feature type="region of interest" description="G1" evidence="1">
    <location>
        <begin position="19"/>
        <end position="26"/>
    </location>
</feature>
<feature type="region of interest" description="G2" evidence="1">
    <location>
        <begin position="63"/>
        <end position="67"/>
    </location>
</feature>
<feature type="region of interest" description="G3" evidence="1">
    <location>
        <begin position="84"/>
        <end position="87"/>
    </location>
</feature>
<feature type="region of interest" description="G4" evidence="1">
    <location>
        <begin position="139"/>
        <end position="142"/>
    </location>
</feature>
<feature type="region of interest" description="G5" evidence="1">
    <location>
        <begin position="177"/>
        <end position="179"/>
    </location>
</feature>
<feature type="binding site" evidence="2">
    <location>
        <begin position="19"/>
        <end position="26"/>
    </location>
    <ligand>
        <name>GTP</name>
        <dbReference type="ChEBI" id="CHEBI:37565"/>
    </ligand>
</feature>
<feature type="binding site" evidence="2">
    <location>
        <position position="26"/>
    </location>
    <ligand>
        <name>Mg(2+)</name>
        <dbReference type="ChEBI" id="CHEBI:18420"/>
    </ligand>
</feature>
<feature type="binding site" evidence="2">
    <location>
        <begin position="84"/>
        <end position="88"/>
    </location>
    <ligand>
        <name>GTP</name>
        <dbReference type="ChEBI" id="CHEBI:37565"/>
    </ligand>
</feature>
<feature type="binding site" evidence="2">
    <location>
        <begin position="139"/>
        <end position="142"/>
    </location>
    <ligand>
        <name>GTP</name>
        <dbReference type="ChEBI" id="CHEBI:37565"/>
    </ligand>
</feature>
<organism>
    <name type="scientific">Streptococcus agalactiae serotype Ia (strain ATCC 27591 / A909 / CDC SS700)</name>
    <dbReference type="NCBI Taxonomy" id="205921"/>
    <lineage>
        <taxon>Bacteria</taxon>
        <taxon>Bacillati</taxon>
        <taxon>Bacillota</taxon>
        <taxon>Bacilli</taxon>
        <taxon>Lactobacillales</taxon>
        <taxon>Streptococcaceae</taxon>
        <taxon>Streptococcus</taxon>
    </lineage>
</organism>
<gene>
    <name evidence="2" type="primary">tuf</name>
    <name type="ordered locus">SAK_0887</name>
</gene>
<comment type="function">
    <text evidence="2">GTP hydrolase that promotes the GTP-dependent binding of aminoacyl-tRNA to the A-site of ribosomes during protein biosynthesis.</text>
</comment>
<comment type="catalytic activity">
    <reaction evidence="2">
        <text>GTP + H2O = GDP + phosphate + H(+)</text>
        <dbReference type="Rhea" id="RHEA:19669"/>
        <dbReference type="ChEBI" id="CHEBI:15377"/>
        <dbReference type="ChEBI" id="CHEBI:15378"/>
        <dbReference type="ChEBI" id="CHEBI:37565"/>
        <dbReference type="ChEBI" id="CHEBI:43474"/>
        <dbReference type="ChEBI" id="CHEBI:58189"/>
        <dbReference type="EC" id="3.6.5.3"/>
    </reaction>
    <physiologicalReaction direction="left-to-right" evidence="2">
        <dbReference type="Rhea" id="RHEA:19670"/>
    </physiologicalReaction>
</comment>
<comment type="subunit">
    <text evidence="2">Monomer.</text>
</comment>
<comment type="subcellular location">
    <subcellularLocation>
        <location evidence="2">Cytoplasm</location>
    </subcellularLocation>
</comment>
<comment type="similarity">
    <text evidence="2">Belongs to the TRAFAC class translation factor GTPase superfamily. Classic translation factor GTPase family. EF-Tu/EF-1A subfamily.</text>
</comment>
<evidence type="ECO:0000250" key="1"/>
<evidence type="ECO:0000255" key="2">
    <source>
        <dbReference type="HAMAP-Rule" id="MF_00118"/>
    </source>
</evidence>